<dbReference type="EMBL" id="L77117">
    <property type="protein sequence ID" value="AAB99559.1"/>
    <property type="molecule type" value="Genomic_DNA"/>
</dbReference>
<dbReference type="PIR" id="H64491">
    <property type="entry name" value="H64491"/>
</dbReference>
<dbReference type="STRING" id="243232.MJ_1537"/>
<dbReference type="PaxDb" id="243232-MJ_1537"/>
<dbReference type="EnsemblBacteria" id="AAB99559">
    <property type="protein sequence ID" value="AAB99559"/>
    <property type="gene ID" value="MJ_1537"/>
</dbReference>
<dbReference type="KEGG" id="mja:MJ_1537"/>
<dbReference type="eggNOG" id="arCOG05089">
    <property type="taxonomic scope" value="Archaea"/>
</dbReference>
<dbReference type="HOGENOM" id="CLU_830572_0_0_2"/>
<dbReference type="InParanoid" id="Q58932"/>
<dbReference type="OrthoDB" id="60197at2157"/>
<dbReference type="Proteomes" id="UP000000805">
    <property type="component" value="Chromosome"/>
</dbReference>
<feature type="chain" id="PRO_0000107395" description="Uncharacterized protein MJ1537">
    <location>
        <begin position="1"/>
        <end position="343"/>
    </location>
</feature>
<name>Y1537_METJA</name>
<proteinExistence type="predicted"/>
<keyword id="KW-1185">Reference proteome</keyword>
<reference key="1">
    <citation type="journal article" date="1996" name="Science">
        <title>Complete genome sequence of the methanogenic archaeon, Methanococcus jannaschii.</title>
        <authorList>
            <person name="Bult C.J."/>
            <person name="White O."/>
            <person name="Olsen G.J."/>
            <person name="Zhou L."/>
            <person name="Fleischmann R.D."/>
            <person name="Sutton G.G."/>
            <person name="Blake J.A."/>
            <person name="FitzGerald L.M."/>
            <person name="Clayton R.A."/>
            <person name="Gocayne J.D."/>
            <person name="Kerlavage A.R."/>
            <person name="Dougherty B.A."/>
            <person name="Tomb J.-F."/>
            <person name="Adams M.D."/>
            <person name="Reich C.I."/>
            <person name="Overbeek R."/>
            <person name="Kirkness E.F."/>
            <person name="Weinstock K.G."/>
            <person name="Merrick J.M."/>
            <person name="Glodek A."/>
            <person name="Scott J.L."/>
            <person name="Geoghagen N.S.M."/>
            <person name="Weidman J.F."/>
            <person name="Fuhrmann J.L."/>
            <person name="Nguyen D."/>
            <person name="Utterback T.R."/>
            <person name="Kelley J.M."/>
            <person name="Peterson J.D."/>
            <person name="Sadow P.W."/>
            <person name="Hanna M.C."/>
            <person name="Cotton M.D."/>
            <person name="Roberts K.M."/>
            <person name="Hurst M.A."/>
            <person name="Kaine B.P."/>
            <person name="Borodovsky M."/>
            <person name="Klenk H.-P."/>
            <person name="Fraser C.M."/>
            <person name="Smith H.O."/>
            <person name="Woese C.R."/>
            <person name="Venter J.C."/>
        </authorList>
    </citation>
    <scope>NUCLEOTIDE SEQUENCE [LARGE SCALE GENOMIC DNA]</scope>
    <source>
        <strain>ATCC 43067 / DSM 2661 / JAL-1 / JCM 10045 / NBRC 100440</strain>
    </source>
</reference>
<gene>
    <name type="ordered locus">MJ1537</name>
</gene>
<accession>Q58932</accession>
<organism>
    <name type="scientific">Methanocaldococcus jannaschii (strain ATCC 43067 / DSM 2661 / JAL-1 / JCM 10045 / NBRC 100440)</name>
    <name type="common">Methanococcus jannaschii</name>
    <dbReference type="NCBI Taxonomy" id="243232"/>
    <lineage>
        <taxon>Archaea</taxon>
        <taxon>Methanobacteriati</taxon>
        <taxon>Methanobacteriota</taxon>
        <taxon>Methanomada group</taxon>
        <taxon>Methanococci</taxon>
        <taxon>Methanococcales</taxon>
        <taxon>Methanocaldococcaceae</taxon>
        <taxon>Methanocaldococcus</taxon>
    </lineage>
</organism>
<protein>
    <recommendedName>
        <fullName>Uncharacterized protein MJ1537</fullName>
    </recommendedName>
</protein>
<sequence length="343" mass="40505">MWHNQGDAMSLSMNLKLCNYHNCNCNIGEEYYNHTYPQFWNRIIEKYKLNKIISYDFTSLPYYRFVGMVGDFISKNITTGPCLLTPKEIRKLNPNIDFEEVKKMFLRHPTFEDYVSVAIETNKGYKNHIIIETYEYAKLVEYKTNIPFEEALKLTKLSAKNFKKYYKKKVKAKYYLTHKKSFDRRLRELCNEHYKYYLENANISKKGKEIIKNNPEESTWLRIKVSFLPEAINKDDSTIVEPVSSIEGMLLANKISEVSGIVVRSPPTLNLKPIMNEGNENEIFYLNNDIEKEIKKLTYRTRTKWGCSLYHNLLFLNSPICCNKNCEECLEIFINKIKILKMG</sequence>